<protein>
    <recommendedName>
        <fullName evidence="1">Ribosomal RNA small subunit methyltransferase A</fullName>
        <ecNumber evidence="1">2.1.1.182</ecNumber>
    </recommendedName>
    <alternativeName>
        <fullName evidence="1">16S rRNA (adenine(1518)-N(6)/adenine(1519)-N(6))-dimethyltransferase</fullName>
    </alternativeName>
    <alternativeName>
        <fullName evidence="1">16S rRNA dimethyladenosine transferase</fullName>
    </alternativeName>
    <alternativeName>
        <fullName evidence="1">16S rRNA dimethylase</fullName>
    </alternativeName>
    <alternativeName>
        <fullName evidence="1">S-adenosylmethionine-6-N', N'-adenosyl(rRNA) dimethyltransferase</fullName>
    </alternativeName>
</protein>
<gene>
    <name evidence="1" type="primary">rsmA</name>
    <name evidence="1" type="synonym">ksgA</name>
    <name type="ordered locus">c0064</name>
</gene>
<sequence>MNNRVHQGHLARKRFGQNFLNDQFVIDSIVSAINPQKGQAMVEIGPGLAALTEPVGERLDQLTVIELDRDLAARLQTHPFLGPKLTIYQQDAMTFNFGELAAKMGQPLRVFGNLPYNISTPLMFHLFSYTDAIADMHFMLQKEVVNRLVAGPNSKAYGRLSVMAQYYCNVIPVLEVPPSAFTPPPKVDSAVVRLVPHATMPHPVKDVRVLSRITTEAFNQRRKTIRNSLGNLFSVEVLTGMGIDPAMRAENISVAQYCQMANYLAENAPLQES</sequence>
<comment type="function">
    <text evidence="1">Specifically dimethylates two adjacent adenosines (A1518 and A1519) in the loop of a conserved hairpin near the 3'-end of 16S rRNA in the 30S particle. May play a critical role in biogenesis of 30S subunits.</text>
</comment>
<comment type="catalytic activity">
    <reaction evidence="1">
        <text>adenosine(1518)/adenosine(1519) in 16S rRNA + 4 S-adenosyl-L-methionine = N(6)-dimethyladenosine(1518)/N(6)-dimethyladenosine(1519) in 16S rRNA + 4 S-adenosyl-L-homocysteine + 4 H(+)</text>
        <dbReference type="Rhea" id="RHEA:19609"/>
        <dbReference type="Rhea" id="RHEA-COMP:10232"/>
        <dbReference type="Rhea" id="RHEA-COMP:10233"/>
        <dbReference type="ChEBI" id="CHEBI:15378"/>
        <dbReference type="ChEBI" id="CHEBI:57856"/>
        <dbReference type="ChEBI" id="CHEBI:59789"/>
        <dbReference type="ChEBI" id="CHEBI:74411"/>
        <dbReference type="ChEBI" id="CHEBI:74493"/>
        <dbReference type="EC" id="2.1.1.182"/>
    </reaction>
</comment>
<comment type="subcellular location">
    <subcellularLocation>
        <location evidence="1">Cytoplasm</location>
    </subcellularLocation>
</comment>
<comment type="similarity">
    <text evidence="1">Belongs to the class I-like SAM-binding methyltransferase superfamily. rRNA adenine N(6)-methyltransferase family. RsmA subfamily.</text>
</comment>
<feature type="chain" id="PRO_0000101525" description="Ribosomal RNA small subunit methyltransferase A">
    <location>
        <begin position="1"/>
        <end position="273"/>
    </location>
</feature>
<feature type="binding site" evidence="1">
    <location>
        <position position="18"/>
    </location>
    <ligand>
        <name>S-adenosyl-L-methionine</name>
        <dbReference type="ChEBI" id="CHEBI:59789"/>
    </ligand>
</feature>
<feature type="binding site" evidence="1">
    <location>
        <position position="20"/>
    </location>
    <ligand>
        <name>S-adenosyl-L-methionine</name>
        <dbReference type="ChEBI" id="CHEBI:59789"/>
    </ligand>
</feature>
<feature type="binding site" evidence="1">
    <location>
        <position position="45"/>
    </location>
    <ligand>
        <name>S-adenosyl-L-methionine</name>
        <dbReference type="ChEBI" id="CHEBI:59789"/>
    </ligand>
</feature>
<feature type="binding site" evidence="1">
    <location>
        <position position="66"/>
    </location>
    <ligand>
        <name>S-adenosyl-L-methionine</name>
        <dbReference type="ChEBI" id="CHEBI:59789"/>
    </ligand>
</feature>
<feature type="binding site" evidence="1">
    <location>
        <position position="91"/>
    </location>
    <ligand>
        <name>S-adenosyl-L-methionine</name>
        <dbReference type="ChEBI" id="CHEBI:59789"/>
    </ligand>
</feature>
<feature type="binding site" evidence="1">
    <location>
        <position position="113"/>
    </location>
    <ligand>
        <name>S-adenosyl-L-methionine</name>
        <dbReference type="ChEBI" id="CHEBI:59789"/>
    </ligand>
</feature>
<reference key="1">
    <citation type="journal article" date="2002" name="Proc. Natl. Acad. Sci. U.S.A.">
        <title>Extensive mosaic structure revealed by the complete genome sequence of uropathogenic Escherichia coli.</title>
        <authorList>
            <person name="Welch R.A."/>
            <person name="Burland V."/>
            <person name="Plunkett G. III"/>
            <person name="Redford P."/>
            <person name="Roesch P."/>
            <person name="Rasko D."/>
            <person name="Buckles E.L."/>
            <person name="Liou S.-R."/>
            <person name="Boutin A."/>
            <person name="Hackett J."/>
            <person name="Stroud D."/>
            <person name="Mayhew G.F."/>
            <person name="Rose D.J."/>
            <person name="Zhou S."/>
            <person name="Schwartz D.C."/>
            <person name="Perna N.T."/>
            <person name="Mobley H.L.T."/>
            <person name="Donnenberg M.S."/>
            <person name="Blattner F.R."/>
        </authorList>
    </citation>
    <scope>NUCLEOTIDE SEQUENCE [LARGE SCALE GENOMIC DNA]</scope>
    <source>
        <strain>CFT073 / ATCC 700928 / UPEC</strain>
    </source>
</reference>
<dbReference type="EC" id="2.1.1.182" evidence="1"/>
<dbReference type="EMBL" id="AE014075">
    <property type="protein sequence ID" value="AAN78560.1"/>
    <property type="molecule type" value="Genomic_DNA"/>
</dbReference>
<dbReference type="RefSeq" id="WP_001065363.1">
    <property type="nucleotide sequence ID" value="NZ_CP051263.1"/>
</dbReference>
<dbReference type="SMR" id="Q8FL96"/>
<dbReference type="STRING" id="199310.c0064"/>
<dbReference type="KEGG" id="ecc:c0064"/>
<dbReference type="eggNOG" id="COG0030">
    <property type="taxonomic scope" value="Bacteria"/>
</dbReference>
<dbReference type="HOGENOM" id="CLU_041220_0_1_6"/>
<dbReference type="BioCyc" id="ECOL199310:C0064-MONOMER"/>
<dbReference type="Proteomes" id="UP000001410">
    <property type="component" value="Chromosome"/>
</dbReference>
<dbReference type="GO" id="GO:0005829">
    <property type="term" value="C:cytosol"/>
    <property type="evidence" value="ECO:0007669"/>
    <property type="project" value="TreeGrafter"/>
</dbReference>
<dbReference type="GO" id="GO:0052908">
    <property type="term" value="F:16S rRNA (adenine(1518)-N(6)/adenine(1519)-N(6))-dimethyltransferase activity"/>
    <property type="evidence" value="ECO:0007669"/>
    <property type="project" value="UniProtKB-EC"/>
</dbReference>
<dbReference type="GO" id="GO:0003723">
    <property type="term" value="F:RNA binding"/>
    <property type="evidence" value="ECO:0007669"/>
    <property type="project" value="UniProtKB-KW"/>
</dbReference>
<dbReference type="FunFam" id="1.10.8.100:FF:000001">
    <property type="entry name" value="Ribosomal RNA small subunit methyltransferase A"/>
    <property type="match status" value="1"/>
</dbReference>
<dbReference type="FunFam" id="3.40.50.150:FF:000006">
    <property type="entry name" value="Ribosomal RNA small subunit methyltransferase A"/>
    <property type="match status" value="1"/>
</dbReference>
<dbReference type="Gene3D" id="1.10.8.100">
    <property type="entry name" value="Ribosomal RNA adenine dimethylase-like, domain 2"/>
    <property type="match status" value="1"/>
</dbReference>
<dbReference type="Gene3D" id="3.40.50.150">
    <property type="entry name" value="Vaccinia Virus protein VP39"/>
    <property type="match status" value="1"/>
</dbReference>
<dbReference type="HAMAP" id="MF_00607">
    <property type="entry name" value="16SrRNA_methyltr_A"/>
    <property type="match status" value="1"/>
</dbReference>
<dbReference type="InterPro" id="IPR001737">
    <property type="entry name" value="KsgA/Erm"/>
</dbReference>
<dbReference type="InterPro" id="IPR023165">
    <property type="entry name" value="rRNA_Ade_diMease-like_C"/>
</dbReference>
<dbReference type="InterPro" id="IPR020596">
    <property type="entry name" value="rRNA_Ade_Mease_Trfase_CS"/>
</dbReference>
<dbReference type="InterPro" id="IPR020598">
    <property type="entry name" value="rRNA_Ade_methylase_Trfase_N"/>
</dbReference>
<dbReference type="InterPro" id="IPR011530">
    <property type="entry name" value="rRNA_adenine_dimethylase"/>
</dbReference>
<dbReference type="InterPro" id="IPR029063">
    <property type="entry name" value="SAM-dependent_MTases_sf"/>
</dbReference>
<dbReference type="NCBIfam" id="TIGR00755">
    <property type="entry name" value="ksgA"/>
    <property type="match status" value="1"/>
</dbReference>
<dbReference type="PANTHER" id="PTHR11727">
    <property type="entry name" value="DIMETHYLADENOSINE TRANSFERASE"/>
    <property type="match status" value="1"/>
</dbReference>
<dbReference type="PANTHER" id="PTHR11727:SF7">
    <property type="entry name" value="DIMETHYLADENOSINE TRANSFERASE-RELATED"/>
    <property type="match status" value="1"/>
</dbReference>
<dbReference type="Pfam" id="PF00398">
    <property type="entry name" value="RrnaAD"/>
    <property type="match status" value="1"/>
</dbReference>
<dbReference type="SMART" id="SM00650">
    <property type="entry name" value="rADc"/>
    <property type="match status" value="1"/>
</dbReference>
<dbReference type="SUPFAM" id="SSF53335">
    <property type="entry name" value="S-adenosyl-L-methionine-dependent methyltransferases"/>
    <property type="match status" value="1"/>
</dbReference>
<dbReference type="PROSITE" id="PS01131">
    <property type="entry name" value="RRNA_A_DIMETH"/>
    <property type="match status" value="1"/>
</dbReference>
<dbReference type="PROSITE" id="PS51689">
    <property type="entry name" value="SAM_RNA_A_N6_MT"/>
    <property type="match status" value="1"/>
</dbReference>
<accession>Q8FL96</accession>
<organism>
    <name type="scientific">Escherichia coli O6:H1 (strain CFT073 / ATCC 700928 / UPEC)</name>
    <dbReference type="NCBI Taxonomy" id="199310"/>
    <lineage>
        <taxon>Bacteria</taxon>
        <taxon>Pseudomonadati</taxon>
        <taxon>Pseudomonadota</taxon>
        <taxon>Gammaproteobacteria</taxon>
        <taxon>Enterobacterales</taxon>
        <taxon>Enterobacteriaceae</taxon>
        <taxon>Escherichia</taxon>
    </lineage>
</organism>
<keyword id="KW-0963">Cytoplasm</keyword>
<keyword id="KW-0489">Methyltransferase</keyword>
<keyword id="KW-1185">Reference proteome</keyword>
<keyword id="KW-0694">RNA-binding</keyword>
<keyword id="KW-0698">rRNA processing</keyword>
<keyword id="KW-0949">S-adenosyl-L-methionine</keyword>
<keyword id="KW-0808">Transferase</keyword>
<evidence type="ECO:0000255" key="1">
    <source>
        <dbReference type="HAMAP-Rule" id="MF_00607"/>
    </source>
</evidence>
<proteinExistence type="inferred from homology"/>
<name>RSMA_ECOL6</name>